<gene>
    <name evidence="1" type="primary">proS</name>
    <name type="ordered locus">AFE_2132</name>
</gene>
<name>SYP_ACIF2</name>
<evidence type="ECO:0000255" key="1">
    <source>
        <dbReference type="HAMAP-Rule" id="MF_01569"/>
    </source>
</evidence>
<sequence length="570" mass="63598">MRASQIFIPTLKETPAEAELVSHQLLLRGGFIRRLASGLYTWMPLGLRVLRKVERVVREEMDRSGAQELLMPVVQPAELWQESGRWEQYGPELLRLRDRHDREFCLGPTHEEVISDLARREIHSYRQLPVNFYQIQTKFRDEIRPRFGLMRGREFIMKDAYSFHMDHSSLEITYQAMYEAYQRVFTRLGLSFRAVEADNGAIGGKRSHEFHVLADSGEDAIVSCHHCDYAANMEKAASRPDLAETEIPLAAERVRTPGIRTVAEQAEHLGIPTAKIVKTVLVVADGKTVMLLLRGDDELNLVKAGHALNAQDVQMARPEEAISATGAPLGFIGPKEPLLSIPILADHRALGVANFSTGANAADLHWINLNWDRDLPRPAAADLRNVRAGDACPHCAEGTLSIRRGIEVGHVFQLGERYSESMGITVLDETGRDATVTMGCYGIGVSRVVAAAVEQHFDDRGIIWPVALAPFEVGIVAINARKSPDVAAAAQALHDRLEAEGYSVLLDDRDERPGVQFATMDLVGLPHRIVVSDTVLAQGVWEYRARRTTENVLLDETQLMERLRKEHARG</sequence>
<dbReference type="EC" id="6.1.1.15" evidence="1"/>
<dbReference type="EMBL" id="CP001219">
    <property type="protein sequence ID" value="ACK79211.1"/>
    <property type="molecule type" value="Genomic_DNA"/>
</dbReference>
<dbReference type="RefSeq" id="WP_009566247.1">
    <property type="nucleotide sequence ID" value="NC_011761.1"/>
</dbReference>
<dbReference type="SMR" id="B7J4Y9"/>
<dbReference type="STRING" id="243159.AFE_2132"/>
<dbReference type="PaxDb" id="243159-AFE_2132"/>
<dbReference type="GeneID" id="65281258"/>
<dbReference type="KEGG" id="afr:AFE_2132"/>
<dbReference type="eggNOG" id="COG0442">
    <property type="taxonomic scope" value="Bacteria"/>
</dbReference>
<dbReference type="HOGENOM" id="CLU_016739_0_0_6"/>
<dbReference type="Proteomes" id="UP000001362">
    <property type="component" value="Chromosome"/>
</dbReference>
<dbReference type="GO" id="GO:0005829">
    <property type="term" value="C:cytosol"/>
    <property type="evidence" value="ECO:0007669"/>
    <property type="project" value="TreeGrafter"/>
</dbReference>
<dbReference type="GO" id="GO:0002161">
    <property type="term" value="F:aminoacyl-tRNA deacylase activity"/>
    <property type="evidence" value="ECO:0007669"/>
    <property type="project" value="InterPro"/>
</dbReference>
<dbReference type="GO" id="GO:0005524">
    <property type="term" value="F:ATP binding"/>
    <property type="evidence" value="ECO:0007669"/>
    <property type="project" value="UniProtKB-UniRule"/>
</dbReference>
<dbReference type="GO" id="GO:0004827">
    <property type="term" value="F:proline-tRNA ligase activity"/>
    <property type="evidence" value="ECO:0007669"/>
    <property type="project" value="UniProtKB-UniRule"/>
</dbReference>
<dbReference type="GO" id="GO:0006433">
    <property type="term" value="P:prolyl-tRNA aminoacylation"/>
    <property type="evidence" value="ECO:0007669"/>
    <property type="project" value="UniProtKB-UniRule"/>
</dbReference>
<dbReference type="CDD" id="cd04334">
    <property type="entry name" value="ProRS-INS"/>
    <property type="match status" value="1"/>
</dbReference>
<dbReference type="CDD" id="cd00861">
    <property type="entry name" value="ProRS_anticodon_short"/>
    <property type="match status" value="1"/>
</dbReference>
<dbReference type="CDD" id="cd00779">
    <property type="entry name" value="ProRS_core_prok"/>
    <property type="match status" value="1"/>
</dbReference>
<dbReference type="FunFam" id="3.30.930.10:FF:000012">
    <property type="entry name" value="Proline--tRNA ligase"/>
    <property type="match status" value="1"/>
</dbReference>
<dbReference type="FunFam" id="3.30.930.10:FF:000065">
    <property type="entry name" value="Proline--tRNA ligase"/>
    <property type="match status" value="1"/>
</dbReference>
<dbReference type="Gene3D" id="3.40.50.800">
    <property type="entry name" value="Anticodon-binding domain"/>
    <property type="match status" value="1"/>
</dbReference>
<dbReference type="Gene3D" id="3.30.930.10">
    <property type="entry name" value="Bira Bifunctional Protein, Domain 2"/>
    <property type="match status" value="2"/>
</dbReference>
<dbReference type="Gene3D" id="3.90.960.10">
    <property type="entry name" value="YbaK/aminoacyl-tRNA synthetase-associated domain"/>
    <property type="match status" value="1"/>
</dbReference>
<dbReference type="HAMAP" id="MF_01569">
    <property type="entry name" value="Pro_tRNA_synth_type1"/>
    <property type="match status" value="1"/>
</dbReference>
<dbReference type="InterPro" id="IPR002314">
    <property type="entry name" value="aa-tRNA-synt_IIb"/>
</dbReference>
<dbReference type="InterPro" id="IPR006195">
    <property type="entry name" value="aa-tRNA-synth_II"/>
</dbReference>
<dbReference type="InterPro" id="IPR045864">
    <property type="entry name" value="aa-tRNA-synth_II/BPL/LPL"/>
</dbReference>
<dbReference type="InterPro" id="IPR004154">
    <property type="entry name" value="Anticodon-bd"/>
</dbReference>
<dbReference type="InterPro" id="IPR036621">
    <property type="entry name" value="Anticodon-bd_dom_sf"/>
</dbReference>
<dbReference type="InterPro" id="IPR002316">
    <property type="entry name" value="Pro-tRNA-ligase_IIa"/>
</dbReference>
<dbReference type="InterPro" id="IPR004500">
    <property type="entry name" value="Pro-tRNA-synth_IIa_bac-type"/>
</dbReference>
<dbReference type="InterPro" id="IPR023717">
    <property type="entry name" value="Pro-tRNA-Synthase_IIa_type1"/>
</dbReference>
<dbReference type="InterPro" id="IPR050062">
    <property type="entry name" value="Pro-tRNA_synthetase"/>
</dbReference>
<dbReference type="InterPro" id="IPR044140">
    <property type="entry name" value="ProRS_anticodon_short"/>
</dbReference>
<dbReference type="InterPro" id="IPR033730">
    <property type="entry name" value="ProRS_core_prok"/>
</dbReference>
<dbReference type="InterPro" id="IPR036754">
    <property type="entry name" value="YbaK/aa-tRNA-synt-asso_dom_sf"/>
</dbReference>
<dbReference type="InterPro" id="IPR007214">
    <property type="entry name" value="YbaK/aa-tRNA-synth-assoc-dom"/>
</dbReference>
<dbReference type="NCBIfam" id="NF006625">
    <property type="entry name" value="PRK09194.1"/>
    <property type="match status" value="1"/>
</dbReference>
<dbReference type="NCBIfam" id="TIGR00409">
    <property type="entry name" value="proS_fam_II"/>
    <property type="match status" value="1"/>
</dbReference>
<dbReference type="PANTHER" id="PTHR42753">
    <property type="entry name" value="MITOCHONDRIAL RIBOSOME PROTEIN L39/PROLYL-TRNA LIGASE FAMILY MEMBER"/>
    <property type="match status" value="1"/>
</dbReference>
<dbReference type="PANTHER" id="PTHR42753:SF2">
    <property type="entry name" value="PROLINE--TRNA LIGASE"/>
    <property type="match status" value="1"/>
</dbReference>
<dbReference type="Pfam" id="PF03129">
    <property type="entry name" value="HGTP_anticodon"/>
    <property type="match status" value="1"/>
</dbReference>
<dbReference type="Pfam" id="PF00587">
    <property type="entry name" value="tRNA-synt_2b"/>
    <property type="match status" value="1"/>
</dbReference>
<dbReference type="Pfam" id="PF04073">
    <property type="entry name" value="tRNA_edit"/>
    <property type="match status" value="1"/>
</dbReference>
<dbReference type="PIRSF" id="PIRSF001535">
    <property type="entry name" value="ProRS_1"/>
    <property type="match status" value="1"/>
</dbReference>
<dbReference type="PRINTS" id="PR01046">
    <property type="entry name" value="TRNASYNTHPRO"/>
</dbReference>
<dbReference type="SUPFAM" id="SSF52954">
    <property type="entry name" value="Class II aaRS ABD-related"/>
    <property type="match status" value="1"/>
</dbReference>
<dbReference type="SUPFAM" id="SSF55681">
    <property type="entry name" value="Class II aaRS and biotin synthetases"/>
    <property type="match status" value="1"/>
</dbReference>
<dbReference type="SUPFAM" id="SSF55826">
    <property type="entry name" value="YbaK/ProRS associated domain"/>
    <property type="match status" value="1"/>
</dbReference>
<dbReference type="PROSITE" id="PS50862">
    <property type="entry name" value="AA_TRNA_LIGASE_II"/>
    <property type="match status" value="1"/>
</dbReference>
<reference key="1">
    <citation type="journal article" date="2008" name="BMC Genomics">
        <title>Acidithiobacillus ferrooxidans metabolism: from genome sequence to industrial applications.</title>
        <authorList>
            <person name="Valdes J."/>
            <person name="Pedroso I."/>
            <person name="Quatrini R."/>
            <person name="Dodson R.J."/>
            <person name="Tettelin H."/>
            <person name="Blake R. II"/>
            <person name="Eisen J.A."/>
            <person name="Holmes D.S."/>
        </authorList>
    </citation>
    <scope>NUCLEOTIDE SEQUENCE [LARGE SCALE GENOMIC DNA]</scope>
    <source>
        <strain>ATCC 23270 / DSM 14882 / CIP 104768 / NCIMB 8455</strain>
    </source>
</reference>
<organism>
    <name type="scientific">Acidithiobacillus ferrooxidans (strain ATCC 23270 / DSM 14882 / CIP 104768 / NCIMB 8455)</name>
    <name type="common">Ferrobacillus ferrooxidans (strain ATCC 23270)</name>
    <dbReference type="NCBI Taxonomy" id="243159"/>
    <lineage>
        <taxon>Bacteria</taxon>
        <taxon>Pseudomonadati</taxon>
        <taxon>Pseudomonadota</taxon>
        <taxon>Acidithiobacillia</taxon>
        <taxon>Acidithiobacillales</taxon>
        <taxon>Acidithiobacillaceae</taxon>
        <taxon>Acidithiobacillus</taxon>
    </lineage>
</organism>
<proteinExistence type="inferred from homology"/>
<accession>B7J4Y9</accession>
<keyword id="KW-0030">Aminoacyl-tRNA synthetase</keyword>
<keyword id="KW-0067">ATP-binding</keyword>
<keyword id="KW-0963">Cytoplasm</keyword>
<keyword id="KW-0436">Ligase</keyword>
<keyword id="KW-0547">Nucleotide-binding</keyword>
<keyword id="KW-0648">Protein biosynthesis</keyword>
<keyword id="KW-1185">Reference proteome</keyword>
<protein>
    <recommendedName>
        <fullName evidence="1">Proline--tRNA ligase</fullName>
        <ecNumber evidence="1">6.1.1.15</ecNumber>
    </recommendedName>
    <alternativeName>
        <fullName evidence="1">Prolyl-tRNA synthetase</fullName>
        <shortName evidence="1">ProRS</shortName>
    </alternativeName>
</protein>
<feature type="chain" id="PRO_1000199338" description="Proline--tRNA ligase">
    <location>
        <begin position="1"/>
        <end position="570"/>
    </location>
</feature>
<comment type="function">
    <text evidence="1">Catalyzes the attachment of proline to tRNA(Pro) in a two-step reaction: proline is first activated by ATP to form Pro-AMP and then transferred to the acceptor end of tRNA(Pro). As ProRS can inadvertently accommodate and process non-cognate amino acids such as alanine and cysteine, to avoid such errors it has two additional distinct editing activities against alanine. One activity is designated as 'pretransfer' editing and involves the tRNA(Pro)-independent hydrolysis of activated Ala-AMP. The other activity is designated 'posttransfer' editing and involves deacylation of mischarged Ala-tRNA(Pro). The misacylated Cys-tRNA(Pro) is not edited by ProRS.</text>
</comment>
<comment type="catalytic activity">
    <reaction evidence="1">
        <text>tRNA(Pro) + L-proline + ATP = L-prolyl-tRNA(Pro) + AMP + diphosphate</text>
        <dbReference type="Rhea" id="RHEA:14305"/>
        <dbReference type="Rhea" id="RHEA-COMP:9700"/>
        <dbReference type="Rhea" id="RHEA-COMP:9702"/>
        <dbReference type="ChEBI" id="CHEBI:30616"/>
        <dbReference type="ChEBI" id="CHEBI:33019"/>
        <dbReference type="ChEBI" id="CHEBI:60039"/>
        <dbReference type="ChEBI" id="CHEBI:78442"/>
        <dbReference type="ChEBI" id="CHEBI:78532"/>
        <dbReference type="ChEBI" id="CHEBI:456215"/>
        <dbReference type="EC" id="6.1.1.15"/>
    </reaction>
</comment>
<comment type="subunit">
    <text evidence="1">Homodimer.</text>
</comment>
<comment type="subcellular location">
    <subcellularLocation>
        <location evidence="1">Cytoplasm</location>
    </subcellularLocation>
</comment>
<comment type="domain">
    <text evidence="1">Consists of three domains: the N-terminal catalytic domain, the editing domain and the C-terminal anticodon-binding domain.</text>
</comment>
<comment type="similarity">
    <text evidence="1">Belongs to the class-II aminoacyl-tRNA synthetase family. ProS type 1 subfamily.</text>
</comment>